<dbReference type="EC" id="6.3.2.13" evidence="1"/>
<dbReference type="EMBL" id="BA000037">
    <property type="protein sequence ID" value="BAC93373.1"/>
    <property type="status" value="ALT_INIT"/>
    <property type="molecule type" value="Genomic_DNA"/>
</dbReference>
<dbReference type="RefSeq" id="WP_043877370.1">
    <property type="nucleotide sequence ID" value="NC_005139.1"/>
</dbReference>
<dbReference type="SMR" id="Q7MNV6"/>
<dbReference type="STRING" id="672.VV93_v1c05520"/>
<dbReference type="KEGG" id="vvy:VV0609"/>
<dbReference type="PATRIC" id="fig|196600.6.peg.628"/>
<dbReference type="eggNOG" id="COG0769">
    <property type="taxonomic scope" value="Bacteria"/>
</dbReference>
<dbReference type="HOGENOM" id="CLU_022291_3_2_6"/>
<dbReference type="UniPathway" id="UPA00219"/>
<dbReference type="Proteomes" id="UP000002675">
    <property type="component" value="Chromosome I"/>
</dbReference>
<dbReference type="GO" id="GO:0005737">
    <property type="term" value="C:cytoplasm"/>
    <property type="evidence" value="ECO:0007669"/>
    <property type="project" value="UniProtKB-SubCell"/>
</dbReference>
<dbReference type="GO" id="GO:0005524">
    <property type="term" value="F:ATP binding"/>
    <property type="evidence" value="ECO:0007669"/>
    <property type="project" value="UniProtKB-UniRule"/>
</dbReference>
<dbReference type="GO" id="GO:0000287">
    <property type="term" value="F:magnesium ion binding"/>
    <property type="evidence" value="ECO:0007669"/>
    <property type="project" value="UniProtKB-UniRule"/>
</dbReference>
<dbReference type="GO" id="GO:0008765">
    <property type="term" value="F:UDP-N-acetylmuramoylalanyl-D-glutamate-2,6-diaminopimelate ligase activity"/>
    <property type="evidence" value="ECO:0007669"/>
    <property type="project" value="UniProtKB-UniRule"/>
</dbReference>
<dbReference type="GO" id="GO:0051301">
    <property type="term" value="P:cell division"/>
    <property type="evidence" value="ECO:0007669"/>
    <property type="project" value="UniProtKB-KW"/>
</dbReference>
<dbReference type="GO" id="GO:0071555">
    <property type="term" value="P:cell wall organization"/>
    <property type="evidence" value="ECO:0007669"/>
    <property type="project" value="UniProtKB-KW"/>
</dbReference>
<dbReference type="GO" id="GO:0009252">
    <property type="term" value="P:peptidoglycan biosynthetic process"/>
    <property type="evidence" value="ECO:0007669"/>
    <property type="project" value="UniProtKB-UniRule"/>
</dbReference>
<dbReference type="GO" id="GO:0008360">
    <property type="term" value="P:regulation of cell shape"/>
    <property type="evidence" value="ECO:0007669"/>
    <property type="project" value="UniProtKB-KW"/>
</dbReference>
<dbReference type="FunFam" id="3.90.190.20:FF:000006">
    <property type="entry name" value="UDP-N-acetylmuramoyl-L-alanyl-D-glutamate--2,6-diaminopimelate ligase"/>
    <property type="match status" value="1"/>
</dbReference>
<dbReference type="Gene3D" id="3.90.190.20">
    <property type="entry name" value="Mur ligase, C-terminal domain"/>
    <property type="match status" value="1"/>
</dbReference>
<dbReference type="Gene3D" id="3.40.1190.10">
    <property type="entry name" value="Mur-like, catalytic domain"/>
    <property type="match status" value="1"/>
</dbReference>
<dbReference type="Gene3D" id="3.40.1390.10">
    <property type="entry name" value="MurE/MurF, N-terminal domain"/>
    <property type="match status" value="1"/>
</dbReference>
<dbReference type="HAMAP" id="MF_00208">
    <property type="entry name" value="MurE"/>
    <property type="match status" value="1"/>
</dbReference>
<dbReference type="InterPro" id="IPR036565">
    <property type="entry name" value="Mur-like_cat_sf"/>
</dbReference>
<dbReference type="InterPro" id="IPR004101">
    <property type="entry name" value="Mur_ligase_C"/>
</dbReference>
<dbReference type="InterPro" id="IPR036615">
    <property type="entry name" value="Mur_ligase_C_dom_sf"/>
</dbReference>
<dbReference type="InterPro" id="IPR013221">
    <property type="entry name" value="Mur_ligase_cen"/>
</dbReference>
<dbReference type="InterPro" id="IPR000713">
    <property type="entry name" value="Mur_ligase_N"/>
</dbReference>
<dbReference type="InterPro" id="IPR035911">
    <property type="entry name" value="MurE/MurF_N"/>
</dbReference>
<dbReference type="InterPro" id="IPR005761">
    <property type="entry name" value="UDP-N-AcMur-Glu-dNH2Pim_ligase"/>
</dbReference>
<dbReference type="NCBIfam" id="TIGR01085">
    <property type="entry name" value="murE"/>
    <property type="match status" value="1"/>
</dbReference>
<dbReference type="NCBIfam" id="NF001123">
    <property type="entry name" value="PRK00139.1-1"/>
    <property type="match status" value="1"/>
</dbReference>
<dbReference type="NCBIfam" id="NF001124">
    <property type="entry name" value="PRK00139.1-2"/>
    <property type="match status" value="1"/>
</dbReference>
<dbReference type="NCBIfam" id="NF001126">
    <property type="entry name" value="PRK00139.1-4"/>
    <property type="match status" value="1"/>
</dbReference>
<dbReference type="PANTHER" id="PTHR23135">
    <property type="entry name" value="MUR LIGASE FAMILY MEMBER"/>
    <property type="match status" value="1"/>
</dbReference>
<dbReference type="PANTHER" id="PTHR23135:SF4">
    <property type="entry name" value="UDP-N-ACETYLMURAMOYL-L-ALANYL-D-GLUTAMATE--2,6-DIAMINOPIMELATE LIGASE MURE HOMOLOG, CHLOROPLASTIC"/>
    <property type="match status" value="1"/>
</dbReference>
<dbReference type="Pfam" id="PF01225">
    <property type="entry name" value="Mur_ligase"/>
    <property type="match status" value="1"/>
</dbReference>
<dbReference type="Pfam" id="PF02875">
    <property type="entry name" value="Mur_ligase_C"/>
    <property type="match status" value="1"/>
</dbReference>
<dbReference type="Pfam" id="PF08245">
    <property type="entry name" value="Mur_ligase_M"/>
    <property type="match status" value="1"/>
</dbReference>
<dbReference type="SUPFAM" id="SSF53623">
    <property type="entry name" value="MurD-like peptide ligases, catalytic domain"/>
    <property type="match status" value="1"/>
</dbReference>
<dbReference type="SUPFAM" id="SSF53244">
    <property type="entry name" value="MurD-like peptide ligases, peptide-binding domain"/>
    <property type="match status" value="1"/>
</dbReference>
<dbReference type="SUPFAM" id="SSF63418">
    <property type="entry name" value="MurE/MurF N-terminal domain"/>
    <property type="match status" value="1"/>
</dbReference>
<keyword id="KW-0067">ATP-binding</keyword>
<keyword id="KW-0131">Cell cycle</keyword>
<keyword id="KW-0132">Cell division</keyword>
<keyword id="KW-0133">Cell shape</keyword>
<keyword id="KW-0961">Cell wall biogenesis/degradation</keyword>
<keyword id="KW-0963">Cytoplasm</keyword>
<keyword id="KW-0436">Ligase</keyword>
<keyword id="KW-0460">Magnesium</keyword>
<keyword id="KW-0547">Nucleotide-binding</keyword>
<keyword id="KW-0573">Peptidoglycan synthesis</keyword>
<reference key="1">
    <citation type="journal article" date="2003" name="Genome Res.">
        <title>Comparative genome analysis of Vibrio vulnificus, a marine pathogen.</title>
        <authorList>
            <person name="Chen C.-Y."/>
            <person name="Wu K.-M."/>
            <person name="Chang Y.-C."/>
            <person name="Chang C.-H."/>
            <person name="Tsai H.-C."/>
            <person name="Liao T.-L."/>
            <person name="Liu Y.-M."/>
            <person name="Chen H.-J."/>
            <person name="Shen A.B.-T."/>
            <person name="Li J.-C."/>
            <person name="Su T.-L."/>
            <person name="Shao C.-P."/>
            <person name="Lee C.-T."/>
            <person name="Hor L.-I."/>
            <person name="Tsai S.-F."/>
        </authorList>
    </citation>
    <scope>NUCLEOTIDE SEQUENCE [LARGE SCALE GENOMIC DNA]</scope>
    <source>
        <strain>YJ016</strain>
    </source>
</reference>
<proteinExistence type="inferred from homology"/>
<organism>
    <name type="scientific">Vibrio vulnificus (strain YJ016)</name>
    <dbReference type="NCBI Taxonomy" id="196600"/>
    <lineage>
        <taxon>Bacteria</taxon>
        <taxon>Pseudomonadati</taxon>
        <taxon>Pseudomonadota</taxon>
        <taxon>Gammaproteobacteria</taxon>
        <taxon>Vibrionales</taxon>
        <taxon>Vibrionaceae</taxon>
        <taxon>Vibrio</taxon>
    </lineage>
</organism>
<protein>
    <recommendedName>
        <fullName evidence="1">UDP-N-acetylmuramoyl-L-alanyl-D-glutamate--2,6-diaminopimelate ligase</fullName>
        <ecNumber evidence="1">6.3.2.13</ecNumber>
    </recommendedName>
    <alternativeName>
        <fullName evidence="1">Meso-A2pm-adding enzyme</fullName>
    </alternativeName>
    <alternativeName>
        <fullName evidence="1">Meso-diaminopimelate-adding enzyme</fullName>
    </alternativeName>
    <alternativeName>
        <fullName evidence="1">UDP-MurNAc-L-Ala-D-Glu:meso-diaminopimelate ligase</fullName>
    </alternativeName>
    <alternativeName>
        <fullName evidence="1">UDP-MurNAc-tripeptide synthetase</fullName>
    </alternativeName>
    <alternativeName>
        <fullName evidence="1">UDP-N-acetylmuramyl-tripeptide synthetase</fullName>
    </alternativeName>
</protein>
<sequence length="493" mass="53560">MRNTMNLTNLLAPWLDCPELADITVQSLELDSRQVKQGDTFVAIVGHVVDGRQYIEKAIEQGANAVIAQSCQQYPPGLVRYQQNVVIVYLEKLDEKLSQLAGRLYQHPEMSLIGVTGTNGKTTITQLIAQWLELAGQKAAVMGTTGNGFLNALQPAANTTGNAVEIQKTLADLQQQGAKATALEVSSHGLVQGRVKALQFAAGVFTNLSRDHLDYHGTMEAYAKAKMTLFTEHQCQHAIINLDDEVGAQWFQELQQGVGVSLFPQDASVKALWASSVAYAESGITIEFDGCFGQGRLHAPLIGEFNATNLLLALATLLALGVDKQALLDSAASLRPVLGRMELFQVNSKAKVVVDYAHTPDALEKALQALRVHCTGHLWAIFGCGGDRDKGKRPMMAEIAERLADHVVLTDDNPRSEDPAMIVQDMLAGLTRGDSAVVEHDRFSALQYALDNAQADDIILLAGKGHEDYQVLKHQTVHYSDRESAQQLLGISS</sequence>
<name>MURE_VIBVY</name>
<comment type="function">
    <text evidence="1">Catalyzes the addition of meso-diaminopimelic acid to the nucleotide precursor UDP-N-acetylmuramoyl-L-alanyl-D-glutamate (UMAG) in the biosynthesis of bacterial cell-wall peptidoglycan.</text>
</comment>
<comment type="catalytic activity">
    <reaction evidence="1">
        <text>UDP-N-acetyl-alpha-D-muramoyl-L-alanyl-D-glutamate + meso-2,6-diaminopimelate + ATP = UDP-N-acetyl-alpha-D-muramoyl-L-alanyl-gamma-D-glutamyl-meso-2,6-diaminopimelate + ADP + phosphate + H(+)</text>
        <dbReference type="Rhea" id="RHEA:23676"/>
        <dbReference type="ChEBI" id="CHEBI:15378"/>
        <dbReference type="ChEBI" id="CHEBI:30616"/>
        <dbReference type="ChEBI" id="CHEBI:43474"/>
        <dbReference type="ChEBI" id="CHEBI:57791"/>
        <dbReference type="ChEBI" id="CHEBI:83900"/>
        <dbReference type="ChEBI" id="CHEBI:83905"/>
        <dbReference type="ChEBI" id="CHEBI:456216"/>
        <dbReference type="EC" id="6.3.2.13"/>
    </reaction>
</comment>
<comment type="cofactor">
    <cofactor evidence="1">
        <name>Mg(2+)</name>
        <dbReference type="ChEBI" id="CHEBI:18420"/>
    </cofactor>
</comment>
<comment type="pathway">
    <text evidence="1">Cell wall biogenesis; peptidoglycan biosynthesis.</text>
</comment>
<comment type="subcellular location">
    <subcellularLocation>
        <location evidence="1">Cytoplasm</location>
    </subcellularLocation>
</comment>
<comment type="PTM">
    <text evidence="1">Carboxylation is probably crucial for Mg(2+) binding and, consequently, for the gamma-phosphate positioning of ATP.</text>
</comment>
<comment type="similarity">
    <text evidence="1">Belongs to the MurCDEF family. MurE subfamily.</text>
</comment>
<comment type="sequence caution" evidence="2">
    <conflict type="erroneous initiation">
        <sequence resource="EMBL-CDS" id="BAC93373"/>
    </conflict>
</comment>
<feature type="chain" id="PRO_0000101970" description="UDP-N-acetylmuramoyl-L-alanyl-D-glutamate--2,6-diaminopimelate ligase">
    <location>
        <begin position="1"/>
        <end position="493"/>
    </location>
</feature>
<feature type="short sequence motif" description="Meso-diaminopimelate recognition motif">
    <location>
        <begin position="412"/>
        <end position="415"/>
    </location>
</feature>
<feature type="binding site" evidence="1">
    <location>
        <position position="30"/>
    </location>
    <ligand>
        <name>UDP-N-acetyl-alpha-D-muramoyl-L-alanyl-D-glutamate</name>
        <dbReference type="ChEBI" id="CHEBI:83900"/>
    </ligand>
</feature>
<feature type="binding site" evidence="1">
    <location>
        <position position="32"/>
    </location>
    <ligand>
        <name>UDP-N-acetyl-alpha-D-muramoyl-L-alanyl-D-glutamate</name>
        <dbReference type="ChEBI" id="CHEBI:83900"/>
    </ligand>
</feature>
<feature type="binding site" evidence="1">
    <location>
        <begin position="117"/>
        <end position="123"/>
    </location>
    <ligand>
        <name>ATP</name>
        <dbReference type="ChEBI" id="CHEBI:30616"/>
    </ligand>
</feature>
<feature type="binding site" evidence="1">
    <location>
        <position position="158"/>
    </location>
    <ligand>
        <name>UDP-N-acetyl-alpha-D-muramoyl-L-alanyl-D-glutamate</name>
        <dbReference type="ChEBI" id="CHEBI:83900"/>
    </ligand>
</feature>
<feature type="binding site" evidence="1">
    <location>
        <begin position="159"/>
        <end position="160"/>
    </location>
    <ligand>
        <name>UDP-N-acetyl-alpha-D-muramoyl-L-alanyl-D-glutamate</name>
        <dbReference type="ChEBI" id="CHEBI:83900"/>
    </ligand>
</feature>
<feature type="binding site" evidence="1">
    <location>
        <position position="186"/>
    </location>
    <ligand>
        <name>UDP-N-acetyl-alpha-D-muramoyl-L-alanyl-D-glutamate</name>
        <dbReference type="ChEBI" id="CHEBI:83900"/>
    </ligand>
</feature>
<feature type="binding site" evidence="1">
    <location>
        <position position="192"/>
    </location>
    <ligand>
        <name>UDP-N-acetyl-alpha-D-muramoyl-L-alanyl-D-glutamate</name>
        <dbReference type="ChEBI" id="CHEBI:83900"/>
    </ligand>
</feature>
<feature type="binding site" evidence="1">
    <location>
        <position position="194"/>
    </location>
    <ligand>
        <name>UDP-N-acetyl-alpha-D-muramoyl-L-alanyl-D-glutamate</name>
        <dbReference type="ChEBI" id="CHEBI:83900"/>
    </ligand>
</feature>
<feature type="binding site" evidence="1">
    <location>
        <position position="388"/>
    </location>
    <ligand>
        <name>meso-2,6-diaminopimelate</name>
        <dbReference type="ChEBI" id="CHEBI:57791"/>
    </ligand>
</feature>
<feature type="binding site" evidence="1">
    <location>
        <begin position="412"/>
        <end position="415"/>
    </location>
    <ligand>
        <name>meso-2,6-diaminopimelate</name>
        <dbReference type="ChEBI" id="CHEBI:57791"/>
    </ligand>
</feature>
<feature type="binding site" evidence="1">
    <location>
        <position position="463"/>
    </location>
    <ligand>
        <name>meso-2,6-diaminopimelate</name>
        <dbReference type="ChEBI" id="CHEBI:57791"/>
    </ligand>
</feature>
<feature type="binding site" evidence="1">
    <location>
        <position position="467"/>
    </location>
    <ligand>
        <name>meso-2,6-diaminopimelate</name>
        <dbReference type="ChEBI" id="CHEBI:57791"/>
    </ligand>
</feature>
<feature type="modified residue" description="N6-carboxylysine" evidence="1">
    <location>
        <position position="226"/>
    </location>
</feature>
<gene>
    <name evidence="1" type="primary">murE</name>
    <name type="ordered locus">VV0609</name>
</gene>
<accession>Q7MNV6</accession>
<evidence type="ECO:0000255" key="1">
    <source>
        <dbReference type="HAMAP-Rule" id="MF_00208"/>
    </source>
</evidence>
<evidence type="ECO:0000305" key="2"/>